<accession>B2RKS6</accession>
<keyword id="KW-0067">ATP-binding</keyword>
<keyword id="KW-0143">Chaperone</keyword>
<keyword id="KW-0963">Cytoplasm</keyword>
<keyword id="KW-0413">Isomerase</keyword>
<keyword id="KW-0547">Nucleotide-binding</keyword>
<organism>
    <name type="scientific">Porphyromonas gingivalis (strain ATCC 33277 / DSM 20709 / CIP 103683 / JCM 12257 / NCTC 11834 / 2561)</name>
    <dbReference type="NCBI Taxonomy" id="431947"/>
    <lineage>
        <taxon>Bacteria</taxon>
        <taxon>Pseudomonadati</taxon>
        <taxon>Bacteroidota</taxon>
        <taxon>Bacteroidia</taxon>
        <taxon>Bacteroidales</taxon>
        <taxon>Porphyromonadaceae</taxon>
        <taxon>Porphyromonas</taxon>
    </lineage>
</organism>
<comment type="function">
    <text evidence="1">Together with its co-chaperonin GroES, plays an essential role in assisting protein folding. The GroEL-GroES system forms a nano-cage that allows encapsulation of the non-native substrate proteins and provides a physical environment optimized to promote and accelerate protein folding.</text>
</comment>
<comment type="catalytic activity">
    <reaction evidence="1">
        <text>ATP + H2O + a folded polypeptide = ADP + phosphate + an unfolded polypeptide.</text>
        <dbReference type="EC" id="5.6.1.7"/>
    </reaction>
</comment>
<comment type="subunit">
    <text evidence="1">Forms a cylinder of 14 subunits composed of two heptameric rings stacked back-to-back. Interacts with the co-chaperonin GroES.</text>
</comment>
<comment type="subcellular location">
    <subcellularLocation>
        <location evidence="1">Cytoplasm</location>
    </subcellularLocation>
</comment>
<comment type="similarity">
    <text evidence="1">Belongs to the chaperonin (HSP60) family.</text>
</comment>
<gene>
    <name evidence="1" type="primary">groEL</name>
    <name evidence="1" type="synonym">groL</name>
    <name type="ordered locus">PGN_1452</name>
</gene>
<feature type="chain" id="PRO_1000130044" description="Chaperonin GroEL">
    <location>
        <begin position="1"/>
        <end position="545"/>
    </location>
</feature>
<feature type="binding site" evidence="1">
    <location>
        <begin position="29"/>
        <end position="32"/>
    </location>
    <ligand>
        <name>ATP</name>
        <dbReference type="ChEBI" id="CHEBI:30616"/>
    </ligand>
</feature>
<feature type="binding site" evidence="1">
    <location>
        <position position="50"/>
    </location>
    <ligand>
        <name>ATP</name>
        <dbReference type="ChEBI" id="CHEBI:30616"/>
    </ligand>
</feature>
<feature type="binding site" evidence="1">
    <location>
        <begin position="86"/>
        <end position="90"/>
    </location>
    <ligand>
        <name>ATP</name>
        <dbReference type="ChEBI" id="CHEBI:30616"/>
    </ligand>
</feature>
<feature type="binding site" evidence="1">
    <location>
        <position position="415"/>
    </location>
    <ligand>
        <name>ATP</name>
        <dbReference type="ChEBI" id="CHEBI:30616"/>
    </ligand>
</feature>
<feature type="binding site" evidence="1">
    <location>
        <position position="495"/>
    </location>
    <ligand>
        <name>ATP</name>
        <dbReference type="ChEBI" id="CHEBI:30616"/>
    </ligand>
</feature>
<sequence>MAKEIKFDMESRDLLKKGVDALANAVKVTLGPKGRNVILSKTYGAPHITKDGVSVAKEIELECPFENMGAQLVKEVASKTNDDAGDGTTTATILAQSIIGVGLKNVTAGANPMDLKRGIDKAVKAVVTHIAGMAKEVGDDFQKIEHVAKISANGDENIGSLIAEAMRKVKKEGVITVEEAKGTDTTVEVVEGMQFDRGYISPYFVTNTDKMEVQMENPFILIYDKKISVLKEMLPILEQTVQTGKPLLIIAEDIDSEALATLVVNRLRGSLKICAVKAPGFGDRRKAMLEDIAILTGGTVISEETGLKLENATMDMLGTAEKVTVDKDNTTIVNGAGNKEGIASRITQIKAQIENTTSDYDREKLQERLAKLAGGVAVLYVGAASEVEMKEKKDRVEDALSATRAAIEEGTVPGGGTAYIRAIAALEGLKGENEDETTGIEIVKRAIEEPLRQIVANAGKEGAVVVQKVKEGKDDFGYNARTDVFENLYSTGVIDPAKVTRVALENAASIAGMFLTTECVIADKKEDNPAAPAMPGGMGGMGGMM</sequence>
<proteinExistence type="inferred from homology"/>
<evidence type="ECO:0000255" key="1">
    <source>
        <dbReference type="HAMAP-Rule" id="MF_00600"/>
    </source>
</evidence>
<name>CH60_PORG3</name>
<reference key="1">
    <citation type="journal article" date="2008" name="DNA Res.">
        <title>Determination of the genome sequence of Porphyromonas gingivalis strain ATCC 33277 and genomic comparison with strain W83 revealed extensive genome rearrangements in P. gingivalis.</title>
        <authorList>
            <person name="Naito M."/>
            <person name="Hirakawa H."/>
            <person name="Yamashita A."/>
            <person name="Ohara N."/>
            <person name="Shoji M."/>
            <person name="Yukitake H."/>
            <person name="Nakayama K."/>
            <person name="Toh H."/>
            <person name="Yoshimura F."/>
            <person name="Kuhara S."/>
            <person name="Hattori M."/>
            <person name="Hayashi T."/>
            <person name="Nakayama K."/>
        </authorList>
    </citation>
    <scope>NUCLEOTIDE SEQUENCE [LARGE SCALE GENOMIC DNA]</scope>
    <source>
        <strain>ATCC 33277 / DSM 20709 / CIP 103683 / JCM 12257 / NCTC 11834 / 2561</strain>
    </source>
</reference>
<protein>
    <recommendedName>
        <fullName evidence="1">Chaperonin GroEL</fullName>
        <ecNumber evidence="1">5.6.1.7</ecNumber>
    </recommendedName>
    <alternativeName>
        <fullName evidence="1">60 kDa chaperonin</fullName>
    </alternativeName>
    <alternativeName>
        <fullName evidence="1">Chaperonin-60</fullName>
        <shortName evidence="1">Cpn60</shortName>
    </alternativeName>
</protein>
<dbReference type="EC" id="5.6.1.7" evidence="1"/>
<dbReference type="EMBL" id="AP009380">
    <property type="protein sequence ID" value="BAG33971.1"/>
    <property type="molecule type" value="Genomic_DNA"/>
</dbReference>
<dbReference type="RefSeq" id="WP_012458280.1">
    <property type="nucleotide sequence ID" value="NZ_CP025930.1"/>
</dbReference>
<dbReference type="SMR" id="B2RKS6"/>
<dbReference type="GeneID" id="29256636"/>
<dbReference type="KEGG" id="pgn:PGN_1452"/>
<dbReference type="eggNOG" id="COG0459">
    <property type="taxonomic scope" value="Bacteria"/>
</dbReference>
<dbReference type="HOGENOM" id="CLU_016503_3_0_10"/>
<dbReference type="OrthoDB" id="9766614at2"/>
<dbReference type="BioCyc" id="PGIN431947:G1G2V-1654-MONOMER"/>
<dbReference type="Proteomes" id="UP000008842">
    <property type="component" value="Chromosome"/>
</dbReference>
<dbReference type="GO" id="GO:0005737">
    <property type="term" value="C:cytoplasm"/>
    <property type="evidence" value="ECO:0007669"/>
    <property type="project" value="UniProtKB-SubCell"/>
</dbReference>
<dbReference type="GO" id="GO:0005524">
    <property type="term" value="F:ATP binding"/>
    <property type="evidence" value="ECO:0007669"/>
    <property type="project" value="UniProtKB-UniRule"/>
</dbReference>
<dbReference type="GO" id="GO:0140662">
    <property type="term" value="F:ATP-dependent protein folding chaperone"/>
    <property type="evidence" value="ECO:0007669"/>
    <property type="project" value="InterPro"/>
</dbReference>
<dbReference type="GO" id="GO:0016853">
    <property type="term" value="F:isomerase activity"/>
    <property type="evidence" value="ECO:0007669"/>
    <property type="project" value="UniProtKB-KW"/>
</dbReference>
<dbReference type="GO" id="GO:0051082">
    <property type="term" value="F:unfolded protein binding"/>
    <property type="evidence" value="ECO:0007669"/>
    <property type="project" value="UniProtKB-UniRule"/>
</dbReference>
<dbReference type="GO" id="GO:0042026">
    <property type="term" value="P:protein refolding"/>
    <property type="evidence" value="ECO:0007669"/>
    <property type="project" value="UniProtKB-UniRule"/>
</dbReference>
<dbReference type="CDD" id="cd03344">
    <property type="entry name" value="GroEL"/>
    <property type="match status" value="1"/>
</dbReference>
<dbReference type="FunFam" id="3.50.7.10:FF:000001">
    <property type="entry name" value="60 kDa chaperonin"/>
    <property type="match status" value="1"/>
</dbReference>
<dbReference type="Gene3D" id="3.50.7.10">
    <property type="entry name" value="GroEL"/>
    <property type="match status" value="1"/>
</dbReference>
<dbReference type="Gene3D" id="1.10.560.10">
    <property type="entry name" value="GroEL-like equatorial domain"/>
    <property type="match status" value="1"/>
</dbReference>
<dbReference type="Gene3D" id="3.30.260.10">
    <property type="entry name" value="TCP-1-like chaperonin intermediate domain"/>
    <property type="match status" value="1"/>
</dbReference>
<dbReference type="HAMAP" id="MF_00600">
    <property type="entry name" value="CH60"/>
    <property type="match status" value="1"/>
</dbReference>
<dbReference type="InterPro" id="IPR018370">
    <property type="entry name" value="Chaperonin_Cpn60_CS"/>
</dbReference>
<dbReference type="InterPro" id="IPR001844">
    <property type="entry name" value="Cpn60/GroEL"/>
</dbReference>
<dbReference type="InterPro" id="IPR002423">
    <property type="entry name" value="Cpn60/GroEL/TCP-1"/>
</dbReference>
<dbReference type="InterPro" id="IPR027409">
    <property type="entry name" value="GroEL-like_apical_dom_sf"/>
</dbReference>
<dbReference type="InterPro" id="IPR027413">
    <property type="entry name" value="GROEL-like_equatorial_sf"/>
</dbReference>
<dbReference type="InterPro" id="IPR027410">
    <property type="entry name" value="TCP-1-like_intermed_sf"/>
</dbReference>
<dbReference type="NCBIfam" id="TIGR02348">
    <property type="entry name" value="GroEL"/>
    <property type="match status" value="1"/>
</dbReference>
<dbReference type="NCBIfam" id="NF000592">
    <property type="entry name" value="PRK00013.1"/>
    <property type="match status" value="1"/>
</dbReference>
<dbReference type="NCBIfam" id="NF009487">
    <property type="entry name" value="PRK12849.1"/>
    <property type="match status" value="1"/>
</dbReference>
<dbReference type="NCBIfam" id="NF009488">
    <property type="entry name" value="PRK12850.1"/>
    <property type="match status" value="1"/>
</dbReference>
<dbReference type="NCBIfam" id="NF009489">
    <property type="entry name" value="PRK12851.1"/>
    <property type="match status" value="1"/>
</dbReference>
<dbReference type="PANTHER" id="PTHR45633">
    <property type="entry name" value="60 KDA HEAT SHOCK PROTEIN, MITOCHONDRIAL"/>
    <property type="match status" value="1"/>
</dbReference>
<dbReference type="Pfam" id="PF00118">
    <property type="entry name" value="Cpn60_TCP1"/>
    <property type="match status" value="1"/>
</dbReference>
<dbReference type="PRINTS" id="PR00298">
    <property type="entry name" value="CHAPERONIN60"/>
</dbReference>
<dbReference type="SUPFAM" id="SSF52029">
    <property type="entry name" value="GroEL apical domain-like"/>
    <property type="match status" value="1"/>
</dbReference>
<dbReference type="SUPFAM" id="SSF48592">
    <property type="entry name" value="GroEL equatorial domain-like"/>
    <property type="match status" value="1"/>
</dbReference>
<dbReference type="SUPFAM" id="SSF54849">
    <property type="entry name" value="GroEL-intermediate domain like"/>
    <property type="match status" value="1"/>
</dbReference>
<dbReference type="PROSITE" id="PS00296">
    <property type="entry name" value="CHAPERONINS_CPN60"/>
    <property type="match status" value="1"/>
</dbReference>